<protein>
    <recommendedName>
        <fullName evidence="29">Alcohol dehydrogenase class-P</fullName>
        <shortName evidence="26">AtADH</shortName>
        <ecNumber evidence="13 17 18">1.1.1.1</ecNumber>
    </recommendedName>
</protein>
<name>ADH1_ARATH</name>
<evidence type="ECO:0000250" key="1">
    <source>
        <dbReference type="UniProtKB" id="P00327"/>
    </source>
</evidence>
<evidence type="ECO:0000269" key="2">
    <source>
    </source>
</evidence>
<evidence type="ECO:0000269" key="3">
    <source>
    </source>
</evidence>
<evidence type="ECO:0000269" key="4">
    <source>
    </source>
</evidence>
<evidence type="ECO:0000269" key="5">
    <source>
    </source>
</evidence>
<evidence type="ECO:0000269" key="6">
    <source>
    </source>
</evidence>
<evidence type="ECO:0000269" key="7">
    <source>
    </source>
</evidence>
<evidence type="ECO:0000269" key="8">
    <source>
    </source>
</evidence>
<evidence type="ECO:0000269" key="9">
    <source>
    </source>
</evidence>
<evidence type="ECO:0000269" key="10">
    <source>
    </source>
</evidence>
<evidence type="ECO:0000269" key="11">
    <source>
    </source>
</evidence>
<evidence type="ECO:0000269" key="12">
    <source>
    </source>
</evidence>
<evidence type="ECO:0000269" key="13">
    <source>
    </source>
</evidence>
<evidence type="ECO:0000269" key="14">
    <source>
    </source>
</evidence>
<evidence type="ECO:0000269" key="15">
    <source>
    </source>
</evidence>
<evidence type="ECO:0000269" key="16">
    <source>
    </source>
</evidence>
<evidence type="ECO:0000269" key="17">
    <source>
    </source>
</evidence>
<evidence type="ECO:0000269" key="18">
    <source>
    </source>
</evidence>
<evidence type="ECO:0000269" key="19">
    <source>
    </source>
</evidence>
<evidence type="ECO:0000269" key="20">
    <source>
    </source>
</evidence>
<evidence type="ECO:0000269" key="21">
    <source>
    </source>
</evidence>
<evidence type="ECO:0000269" key="22">
    <source>
    </source>
</evidence>
<evidence type="ECO:0000269" key="23">
    <source>
    </source>
</evidence>
<evidence type="ECO:0000269" key="24">
    <source>
    </source>
</evidence>
<evidence type="ECO:0000269" key="25">
    <source ref="11"/>
</evidence>
<evidence type="ECO:0000303" key="26">
    <source>
    </source>
</evidence>
<evidence type="ECO:0000303" key="27">
    <source>
    </source>
</evidence>
<evidence type="ECO:0000303" key="28">
    <source>
    </source>
</evidence>
<evidence type="ECO:0000305" key="29"/>
<evidence type="ECO:0000305" key="30">
    <source>
    </source>
</evidence>
<evidence type="ECO:0000305" key="31">
    <source>
    </source>
</evidence>
<evidence type="ECO:0000312" key="32">
    <source>
        <dbReference type="Araport" id="AT1G77120"/>
    </source>
</evidence>
<evidence type="ECO:0000312" key="33">
    <source>
        <dbReference type="EMBL" id="AAC00625.1"/>
    </source>
</evidence>
<evidence type="ECO:0007744" key="34">
    <source>
        <dbReference type="PDB" id="4RQT"/>
    </source>
</evidence>
<evidence type="ECO:0007744" key="35">
    <source>
        <dbReference type="PDB" id="4RQU"/>
    </source>
</evidence>
<evidence type="ECO:0007744" key="36">
    <source>
        <dbReference type="PDB" id="8CON"/>
    </source>
</evidence>
<evidence type="ECO:0007744" key="37">
    <source>
    </source>
</evidence>
<evidence type="ECO:0007744" key="38">
    <source>
    </source>
</evidence>
<evidence type="ECO:0007744" key="39">
    <source>
    </source>
</evidence>
<evidence type="ECO:0007829" key="40">
    <source>
        <dbReference type="PDB" id="4RQT"/>
    </source>
</evidence>
<evidence type="ECO:0007829" key="41">
    <source>
        <dbReference type="PDB" id="8CON"/>
    </source>
</evidence>
<sequence>MSTTGQIIRCKAAVAWEAGKPLVIEEVEVAPPQKHEVRIKILFTSLCHTDVYFWEAKGQTPLFPRIFGHEAGGIVESVGEGVTDLQPGDHVLPIFTGECGECRHCHSEESNMCDLLRINTERGGMIHDGESRFSINGKPIYHFLGTSTFSEYTVVHSGQVAKINPDAPLDKVCIVSCGLSTGLGATLNVAKPKKGQSVAIFGLGAVGLGAAEGARIAGASRIIGVDFNSKRFDQAKEFGVTECVNPKDHDKPIQQVIAEMTDGGVDRSVECTGSVQAMIQAFECVHDGWGVAVLVGVPSKDDAFKTHPMNFLNERTLKGTFFGNYKPKTDIPGVVEKYMNKELELEKFITHTVPFSEINKAFDYMLKGESIRCIITMGA</sequence>
<reference key="1">
    <citation type="journal article" date="1986" name="Proc. Natl. Acad. Sci. U.S.A.">
        <title>Molecular cloning and DNA sequence of the Arabidopsis thaliana alcohol dehydrogenase gene.</title>
        <authorList>
            <person name="Chang C."/>
            <person name="Meyerowitz E.M."/>
        </authorList>
    </citation>
    <scope>NUCLEOTIDE SEQUENCE [GENOMIC DNA]</scope>
    <scope>INDUCTION BY 2,4-DICHLOROPHENOXYACETIC ACID</scope>
</reference>
<reference key="2">
    <citation type="journal article" date="1994" name="Genetics">
        <title>Haplotypic divergence coupled with lack of diversity at the Arabidopsis thaliana alcohol dehydrogenase locus: roles for both balancing and directional selection?</title>
        <authorList>
            <person name="Hanfstingl U."/>
            <person name="Berry A."/>
            <person name="Kellogg E.A."/>
            <person name="Costa J.T. III"/>
            <person name="Ruediger W."/>
            <person name="Ausubel F.M."/>
        </authorList>
    </citation>
    <scope>NUCLEOTIDE SEQUENCE [GENOMIC DNA]</scope>
    <scope>SUBCELLULAR LOCATION</scope>
    <source>
        <strain>cv. Columbia</strain>
    </source>
</reference>
<reference key="3">
    <citation type="journal article" date="1996" name="Genetics">
        <title>Intragenic recombination in the Adh locus of the wild plant Arabidopsis thaliana.</title>
        <authorList>
            <person name="Innan H."/>
            <person name="Tajima F."/>
            <person name="Terauchi R."/>
            <person name="Miyashita N.T."/>
        </authorList>
    </citation>
    <scope>NUCLEOTIDE SEQUENCE [GENOMIC DNA]</scope>
    <source>
        <strain>cv. Al-0</strain>
        <strain>cv. Bl-1</strain>
        <strain>cv. Bla-10</strain>
        <strain>cv. Bs-0</strain>
        <strain>cv. Chi-0</strain>
        <strain>cv. Ci-0</strain>
        <strain>cv. Es-0</strain>
        <strain>cv. Gr-1</strain>
        <strain>cv. Ita-0</strain>
        <strain>cv. Yo-0</strain>
    </source>
</reference>
<reference key="4">
    <citation type="journal article" date="1996" name="Mol. Biol. Evol.">
        <title>Intra- and interspecific variation of the alcohol dehydrogenase locus region in wild plants Arabis gemmifera and Arabidopsis thaliana.</title>
        <authorList>
            <person name="Miyashita N.T."/>
            <person name="Innan H."/>
            <person name="Terauchi R."/>
        </authorList>
    </citation>
    <scope>NUCLEOTIDE SEQUENCE [GENOMIC DNA]</scope>
    <source>
        <strain>cv. Aa-0</strain>
        <strain>cv. Hiroshima</strain>
        <strain>cv. Mt-0</strain>
        <strain>cv. Pog-0</strain>
        <strain>cv. Shokei</strain>
    </source>
</reference>
<reference key="5">
    <citation type="journal article" date="2000" name="Mol. Biol. Evol.">
        <title>Comparative evolutionary analysis of chalcone synthase and alcohol dehydrogenase loci in Arabidopsis, Arabis, and related genera (Brassicaceae).</title>
        <authorList>
            <person name="Koch M.A."/>
            <person name="Haubold B."/>
            <person name="Mitchell-Olds T."/>
        </authorList>
    </citation>
    <scope>NUCLEOTIDE SEQUENCE [GENOMIC DNA]</scope>
</reference>
<reference key="6">
    <citation type="journal article" date="2001" name="Mol. Biol. Evol.">
        <title>DNA variation in the 5' upstream region of the Adh locus of the wild plants Arabidopsis thaliana and Arabis gemmifera.</title>
        <authorList>
            <person name="Miyashita N.T."/>
        </authorList>
    </citation>
    <scope>NUCLEOTIDE SEQUENCE [GENOMIC DNA]</scope>
    <source>
        <strain>cv. Cvi-0</strain>
        <strain>cv. Kas-1</strain>
    </source>
</reference>
<reference key="7">
    <citation type="submission" date="2004-04" db="EMBL/GenBank/DDBJ databases">
        <title>Post-transcriptional silencing of the Arabidopsis adh1 gene triggered by a fully homologous transgene.</title>
        <authorList>
            <person name="Santos D."/>
        </authorList>
    </citation>
    <scope>NUCLEOTIDE SEQUENCE [GENOMIC DNA]</scope>
    <source>
        <strain>cv. C24</strain>
    </source>
</reference>
<reference key="8">
    <citation type="journal article" date="2000" name="Nature">
        <title>Sequence and analysis of chromosome 1 of the plant Arabidopsis thaliana.</title>
        <authorList>
            <person name="Theologis A."/>
            <person name="Ecker J.R."/>
            <person name="Palm C.J."/>
            <person name="Federspiel N.A."/>
            <person name="Kaul S."/>
            <person name="White O."/>
            <person name="Alonso J."/>
            <person name="Altafi H."/>
            <person name="Araujo R."/>
            <person name="Bowman C.L."/>
            <person name="Brooks S.Y."/>
            <person name="Buehler E."/>
            <person name="Chan A."/>
            <person name="Chao Q."/>
            <person name="Chen H."/>
            <person name="Cheuk R.F."/>
            <person name="Chin C.W."/>
            <person name="Chung M.K."/>
            <person name="Conn L."/>
            <person name="Conway A.B."/>
            <person name="Conway A.R."/>
            <person name="Creasy T.H."/>
            <person name="Dewar K."/>
            <person name="Dunn P."/>
            <person name="Etgu P."/>
            <person name="Feldblyum T.V."/>
            <person name="Feng J.-D."/>
            <person name="Fong B."/>
            <person name="Fujii C.Y."/>
            <person name="Gill J.E."/>
            <person name="Goldsmith A.D."/>
            <person name="Haas B."/>
            <person name="Hansen N.F."/>
            <person name="Hughes B."/>
            <person name="Huizar L."/>
            <person name="Hunter J.L."/>
            <person name="Jenkins J."/>
            <person name="Johnson-Hopson C."/>
            <person name="Khan S."/>
            <person name="Khaykin E."/>
            <person name="Kim C.J."/>
            <person name="Koo H.L."/>
            <person name="Kremenetskaia I."/>
            <person name="Kurtz D.B."/>
            <person name="Kwan A."/>
            <person name="Lam B."/>
            <person name="Langin-Hooper S."/>
            <person name="Lee A."/>
            <person name="Lee J.M."/>
            <person name="Lenz C.A."/>
            <person name="Li J.H."/>
            <person name="Li Y.-P."/>
            <person name="Lin X."/>
            <person name="Liu S.X."/>
            <person name="Liu Z.A."/>
            <person name="Luros J.S."/>
            <person name="Maiti R."/>
            <person name="Marziali A."/>
            <person name="Militscher J."/>
            <person name="Miranda M."/>
            <person name="Nguyen M."/>
            <person name="Nierman W.C."/>
            <person name="Osborne B.I."/>
            <person name="Pai G."/>
            <person name="Peterson J."/>
            <person name="Pham P.K."/>
            <person name="Rizzo M."/>
            <person name="Rooney T."/>
            <person name="Rowley D."/>
            <person name="Sakano H."/>
            <person name="Salzberg S.L."/>
            <person name="Schwartz J.R."/>
            <person name="Shinn P."/>
            <person name="Southwick A.M."/>
            <person name="Sun H."/>
            <person name="Tallon L.J."/>
            <person name="Tambunga G."/>
            <person name="Toriumi M.J."/>
            <person name="Town C.D."/>
            <person name="Utterback T."/>
            <person name="Van Aken S."/>
            <person name="Vaysberg M."/>
            <person name="Vysotskaia V.S."/>
            <person name="Walker M."/>
            <person name="Wu D."/>
            <person name="Yu G."/>
            <person name="Fraser C.M."/>
            <person name="Venter J.C."/>
            <person name="Davis R.W."/>
        </authorList>
    </citation>
    <scope>NUCLEOTIDE SEQUENCE [LARGE SCALE GENOMIC DNA]</scope>
    <source>
        <strain>cv. Columbia</strain>
    </source>
</reference>
<reference key="9">
    <citation type="journal article" date="2017" name="Plant J.">
        <title>Araport11: a complete reannotation of the Arabidopsis thaliana reference genome.</title>
        <authorList>
            <person name="Cheng C.Y."/>
            <person name="Krishnakumar V."/>
            <person name="Chan A.P."/>
            <person name="Thibaud-Nissen F."/>
            <person name="Schobel S."/>
            <person name="Town C.D."/>
        </authorList>
    </citation>
    <scope>GENOME REANNOTATION</scope>
    <source>
        <strain>cv. Columbia</strain>
    </source>
</reference>
<reference key="10">
    <citation type="journal article" date="2003" name="Science">
        <title>Empirical analysis of transcriptional activity in the Arabidopsis genome.</title>
        <authorList>
            <person name="Yamada K."/>
            <person name="Lim J."/>
            <person name="Dale J.M."/>
            <person name="Chen H."/>
            <person name="Shinn P."/>
            <person name="Palm C.J."/>
            <person name="Southwick A.M."/>
            <person name="Wu H.C."/>
            <person name="Kim C.J."/>
            <person name="Nguyen M."/>
            <person name="Pham P.K."/>
            <person name="Cheuk R.F."/>
            <person name="Karlin-Newmann G."/>
            <person name="Liu S.X."/>
            <person name="Lam B."/>
            <person name="Sakano H."/>
            <person name="Wu T."/>
            <person name="Yu G."/>
            <person name="Miranda M."/>
            <person name="Quach H.L."/>
            <person name="Tripp M."/>
            <person name="Chang C.H."/>
            <person name="Lee J.M."/>
            <person name="Toriumi M.J."/>
            <person name="Chan M.M."/>
            <person name="Tang C.C."/>
            <person name="Onodera C.S."/>
            <person name="Deng J.M."/>
            <person name="Akiyama K."/>
            <person name="Ansari Y."/>
            <person name="Arakawa T."/>
            <person name="Banh J."/>
            <person name="Banno F."/>
            <person name="Bowser L."/>
            <person name="Brooks S.Y."/>
            <person name="Carninci P."/>
            <person name="Chao Q."/>
            <person name="Choy N."/>
            <person name="Enju A."/>
            <person name="Goldsmith A.D."/>
            <person name="Gurjal M."/>
            <person name="Hansen N.F."/>
            <person name="Hayashizaki Y."/>
            <person name="Johnson-Hopson C."/>
            <person name="Hsuan V.W."/>
            <person name="Iida K."/>
            <person name="Karnes M."/>
            <person name="Khan S."/>
            <person name="Koesema E."/>
            <person name="Ishida J."/>
            <person name="Jiang P.X."/>
            <person name="Jones T."/>
            <person name="Kawai J."/>
            <person name="Kamiya A."/>
            <person name="Meyers C."/>
            <person name="Nakajima M."/>
            <person name="Narusaka M."/>
            <person name="Seki M."/>
            <person name="Sakurai T."/>
            <person name="Satou M."/>
            <person name="Tamse R."/>
            <person name="Vaysberg M."/>
            <person name="Wallender E.K."/>
            <person name="Wong C."/>
            <person name="Yamamura Y."/>
            <person name="Yuan S."/>
            <person name="Shinozaki K."/>
            <person name="Davis R.W."/>
            <person name="Theologis A."/>
            <person name="Ecker J.R."/>
        </authorList>
    </citation>
    <scope>NUCLEOTIDE SEQUENCE [LARGE SCALE MRNA]</scope>
    <source>
        <strain>cv. Columbia</strain>
    </source>
</reference>
<reference key="11">
    <citation type="submission" date="2002-03" db="EMBL/GenBank/DDBJ databases">
        <title>Full-length cDNA from Arabidopsis thaliana.</title>
        <authorList>
            <person name="Brover V.V."/>
            <person name="Troukhan M.E."/>
            <person name="Alexandrov N.A."/>
            <person name="Lu Y.-P."/>
            <person name="Flavell R.B."/>
            <person name="Feldmann K.A."/>
        </authorList>
    </citation>
    <scope>NUCLEOTIDE SEQUENCE [LARGE SCALE MRNA]</scope>
    <scope>VARIANTS ASP-101 AND LYS-106</scope>
</reference>
<reference key="12">
    <citation type="journal article" date="1999" name="Genome">
        <title>Development of amplified consensus genetic markers (ACGM) in Brassica napus from Arabidopsis thaliana sequences of known biological function.</title>
        <authorList>
            <person name="Brunel D."/>
            <person name="Froger N."/>
            <person name="Pelletier G."/>
        </authorList>
    </citation>
    <scope>NUCLEOTIDE SEQUENCE [GENOMIC DNA] OF 201-331</scope>
    <source>
        <strain>cv. Columbia</strain>
    </source>
</reference>
<reference key="13">
    <citation type="journal article" date="1988" name="Biochem. Genet.">
        <title>Isolation and biochemical analysis of ethyl methanesulfonate-induced alcohol dehydrogenase null mutants of arabidopsis thaliana (L.) Heynh.</title>
        <authorList>
            <person name="Jacobs M."/>
            <person name="Dolferus R."/>
            <person name="Van den Bossche D."/>
        </authorList>
    </citation>
    <scope>DISRUPTION PHENOTYPE</scope>
    <scope>MUTAGENESIS OF CYS-105</scope>
    <scope>CATALYTIC ACTIVITY</scope>
    <source>
        <strain>cv. Be-0</strain>
        <strain>cv. Ts-1</strain>
    </source>
</reference>
<reference key="14">
    <citation type="journal article" date="1990" name="Mol. Gen. Genet.">
        <title>Sequence analysis of two null-mutant alleles of the single Arabidopsis Adh locus.</title>
        <authorList>
            <person name="Dolferus R."/>
            <person name="van den Bossche D."/>
            <person name="Jacobs M."/>
        </authorList>
    </citation>
    <scope>MUTAGENESIS OF CYS-105</scope>
    <source>
        <strain>cv. Be-0</strain>
    </source>
</reference>
<reference key="15">
    <citation type="journal article" date="1993" name="Plant Physiol.">
        <title>Low temperature induces the accumulation of alcohol dehydrogenase mRNA in Arabidopsis thaliana, a chilling-tolerant plant.</title>
        <authorList>
            <person name="Jarillo J.A."/>
            <person name="Leyva A."/>
            <person name="Salinas J."/>
            <person name="Martinez-Zapater J.M."/>
        </authorList>
    </citation>
    <scope>INDUCTION BY COLD</scope>
    <source>
        <strain>cv. Landsberg erecta</strain>
    </source>
</reference>
<reference key="16">
    <citation type="journal article" date="1996" name="Plant Physiol.">
        <title>Abscisic acid induces the alcohol dehydrogenase gene in Arabidopsis.</title>
        <authorList>
            <person name="de Bruxelles G.L."/>
            <person name="Peacock W.J."/>
            <person name="Dennis E.S."/>
            <person name="Dolferus R."/>
        </authorList>
    </citation>
    <scope>INDUCTION BY HYPOXIA; ABSCISIC ACID; DEHYDRATION AND COLD</scope>
    <source>
        <strain>cv. C24</strain>
    </source>
</reference>
<reference key="17">
    <citation type="journal article" date="1997" name="Plant Cell Physiol.">
        <title>Changes in soluble sugar, starch, and alcohol dehydrogenase in Arabidopsis thaliana exposed to N2 diluted atmospheres.</title>
        <authorList>
            <person name="Porterfield D.M."/>
            <person name="Crispi M.L."/>
            <person name="Musgrave M.E."/>
        </authorList>
    </citation>
    <scope>ACTIVITY REGULATION</scope>
    <scope>INDUCTION BY HYPOXIA</scope>
</reference>
<reference key="18">
    <citation type="journal article" date="1998" name="Genetics">
        <title>Evidence for a role for AtMYB2 in the induction of the Arabidopsis alcohol dehydrogenase gene (ADH1) by low oxygen.</title>
        <authorList>
            <person name="Hoeren F.U."/>
            <person name="Dolferus R."/>
            <person name="Wu Y."/>
            <person name="Peacock W.J."/>
            <person name="Dennis E.S."/>
        </authorList>
    </citation>
    <scope>INDUCTION BY MYB2; ABSCISIC ACID; DEHYDRATION; COLD AND HYPOXIA</scope>
    <scope>TISSUE SPECIFICITY</scope>
</reference>
<reference key="19">
    <citation type="journal article" date="1999" name="Plant Physiol.">
        <title>Arabidopsis roots and shoots have different mechanisms for hypoxic stress tolerance.</title>
        <authorList>
            <person name="Ellis M.H."/>
            <person name="Dennis E.S."/>
            <person name="Peacock W.J."/>
        </authorList>
    </citation>
    <scope>FUNCTION</scope>
    <scope>DISRUPTION PHENOTYPE</scope>
    <source>
        <strain>cv. C24</strain>
    </source>
</reference>
<reference key="20">
    <citation type="journal article" date="2001" name="Plant Physiol.">
        <title>Transgene expression patterns indicate that spaceflight affects stress signal perception and transduction in arabidopsis.</title>
        <authorList>
            <person name="Paul A.-L."/>
            <person name="Daugherty C.J."/>
            <person name="Bihn E.A."/>
            <person name="Chapman D.K."/>
            <person name="Norwood K.L.L."/>
            <person name="Ferl R.J."/>
        </authorList>
    </citation>
    <scope>INDUCTION BY SPACEFLIGHT AND HYPOXIA</scope>
    <source>
        <strain>cv. Wassilewskija</strain>
    </source>
</reference>
<reference key="21">
    <citation type="journal article" date="2001" name="Plant Physiol.">
        <title>Signaling events in the hypoxic induction of alcohol dehydrogenase gene in Arabidopsis.</title>
        <authorList>
            <person name="Peng H.P."/>
            <person name="Chan C.S."/>
            <person name="Shih M.C."/>
            <person name="Yang S.F."/>
        </authorList>
    </citation>
    <scope>INDUCTION BY HYPOXIA</scope>
</reference>
<reference key="22">
    <citation type="journal article" date="2002" name="Life Support Biosph. Sci.">
        <title>Remote sensing of gene expression in Planta: transgenic plants as monitors of exogenous stress perception in extraterrestrial environments.</title>
        <authorList>
            <person name="Manak M.S."/>
            <person name="Paul A.L."/>
            <person name="Sehnke P.C."/>
            <person name="Ferl R.J."/>
        </authorList>
    </citation>
    <scope>INDUCTION BY HYPOXIA</scope>
    <scope>HIGH SALT</scope>
    <scope>COLD</scope>
    <scope>ABCISSIC ACID</scope>
</reference>
<reference key="23">
    <citation type="journal article" date="2003" name="Ann. Bot.">
        <title>Gene and enhancer trap transposable elements reveal oxygen deprivation-regulated genes and their complex patterns of expression in Arabidopsis.</title>
        <authorList>
            <person name="Baxter-Burrell A."/>
            <person name="Chang R."/>
            <person name="Springer P."/>
            <person name="Bailey-Serres J."/>
        </authorList>
    </citation>
    <scope>INDUCTION BY OXYGEN DEPRIVATION AND CAFFEINE</scope>
    <scope>DISRUPTION PHENOTYPE</scope>
    <source>
        <strain>cv. Landsberg erecta</strain>
    </source>
</reference>
<reference key="24">
    <citation type="journal article" date="2003" name="Plant Physiol.">
        <title>Enhanced low oxygen survival in Arabidopsis through increased metabolic flux in the fermentative pathway.</title>
        <authorList>
            <person name="Ismond K.P."/>
            <person name="Dolferus R."/>
            <person name="de Pauw M."/>
            <person name="Dennis E.S."/>
            <person name="Good A.G."/>
        </authorList>
    </citation>
    <scope>FUNCTION</scope>
    <scope>DISRUPTION PHENOTYPE</scope>
    <source>
        <strain>cv. C24</strain>
    </source>
</reference>
<reference key="25">
    <citation type="journal article" date="2005" name="Plant Physiol.">
        <title>Stress-induced protein S-glutathionylation in Arabidopsis.</title>
        <authorList>
            <person name="Dixon D.P."/>
            <person name="Skipsey M."/>
            <person name="Grundy N.M."/>
            <person name="Edwards R."/>
        </authorList>
    </citation>
    <scope>GLUTATHIONYLATION</scope>
    <source>
        <strain>cv. Columbia</strain>
    </source>
</reference>
<reference key="26">
    <citation type="journal article" date="2008" name="J. Proteome Res.">
        <title>Site-specific phosphorylation profiling of Arabidopsis proteins by mass spectrometry and peptide chip analysis.</title>
        <authorList>
            <person name="de la Fuente van Bentem S."/>
            <person name="Anrather D."/>
            <person name="Dohnal I."/>
            <person name="Roitinger E."/>
            <person name="Csaszar E."/>
            <person name="Joore J."/>
            <person name="Buijnink J."/>
            <person name="Carreri A."/>
            <person name="Forzani C."/>
            <person name="Lorkovic Z.J."/>
            <person name="Barta A."/>
            <person name="Lecourieux D."/>
            <person name="Verhounig A."/>
            <person name="Jonak C."/>
            <person name="Hirt H."/>
        </authorList>
    </citation>
    <scope>PHOSPHORYLATION [LARGE SCALE ANALYSIS] AT SER-229</scope>
    <scope>IDENTIFICATION BY MASS SPECTROMETRY [LARGE SCALE ANALYSIS]</scope>
    <source>
        <tissue>Root</tissue>
    </source>
</reference>
<reference key="27">
    <citation type="journal article" date="2008" name="Plant Physiol.">
        <title>Functional identification of Arabidopsis stress regulatory genes using the controlled cDNA overexpression system.</title>
        <authorList>
            <person name="Papdi C."/>
            <person name="Abraham E."/>
            <person name="Joseph M.P."/>
            <person name="Popescu C."/>
            <person name="Koncz C."/>
            <person name="Szabados L."/>
        </authorList>
    </citation>
    <scope>INDUCTION BY ABSCISIC ACID; ESTRADIOL; NACL; H2O2 AND SUCROSE</scope>
</reference>
<reference key="28">
    <citation type="journal article" date="2009" name="J. Proteomics">
        <title>Phosphoproteomic analysis of nuclei-enriched fractions from Arabidopsis thaliana.</title>
        <authorList>
            <person name="Jones A.M.E."/>
            <person name="MacLean D."/>
            <person name="Studholme D.J."/>
            <person name="Serna-Sanz A."/>
            <person name="Andreasson E."/>
            <person name="Rathjen J.P."/>
            <person name="Peck S.C."/>
        </authorList>
    </citation>
    <scope>PHOSPHORYLATION [LARGE SCALE ANALYSIS] AT SER-229</scope>
    <scope>IDENTIFICATION BY MASS SPECTROMETRY [LARGE SCALE ANALYSIS]</scope>
    <source>
        <strain>cv. Columbia</strain>
    </source>
</reference>
<reference key="29">
    <citation type="journal article" date="2010" name="Proc. Natl. Acad. Sci. U.S.A.">
        <title>High frequency targeted mutagenesis in Arabidopsis thaliana using zinc finger nucleases.</title>
        <authorList>
            <person name="Zhang F."/>
            <person name="Maeder M.L."/>
            <person name="Unger-Wallace E."/>
            <person name="Hoshaw J.P."/>
            <person name="Reyon D."/>
            <person name="Christian M."/>
            <person name="Li X."/>
            <person name="Pierick C.J."/>
            <person name="Dobbs D."/>
            <person name="Peterson T."/>
            <person name="Joung J.K."/>
            <person name="Voytas D.F."/>
        </authorList>
    </citation>
    <scope>FUNCTION</scope>
    <scope>DISRUPTION PHENOTYPE</scope>
</reference>
<reference key="30">
    <citation type="journal article" date="2012" name="Mol. Cell. Proteomics">
        <title>Comparative large-scale characterisation of plant vs. mammal proteins reveals similar and idiosyncratic N-alpha acetylation features.</title>
        <authorList>
            <person name="Bienvenut W.V."/>
            <person name="Sumpton D."/>
            <person name="Martinez A."/>
            <person name="Lilla S."/>
            <person name="Espagne C."/>
            <person name="Meinnel T."/>
            <person name="Giglione C."/>
        </authorList>
    </citation>
    <scope>ACETYLATION [LARGE SCALE ANALYSIS] AT SER-2</scope>
    <scope>CLEAVAGE OF INITIATOR METHIONINE [LARGE SCALE ANALYSIS]</scope>
    <scope>IDENTIFICATION BY MASS SPECTROMETRY [LARGE SCALE ANALYSIS]</scope>
</reference>
<reference key="31">
    <citation type="journal article" date="2013" name="Protein Expr. Purif.">
        <title>Purification and enzymatic characterization of alcohol dehydrogenase from Arabidopsis thaliana.</title>
        <authorList>
            <person name="Cheng F."/>
            <person name="Hu T."/>
            <person name="An Y."/>
            <person name="Huang J."/>
            <person name="Xu Y."/>
        </authorList>
    </citation>
    <scope>FUNCTION</scope>
    <scope>BIOPHYSICOCHEMICAL PROPERTIES</scope>
    <scope>HOMODIMER</scope>
    <scope>CATALYTIC ACTIVITY</scope>
</reference>
<reference key="32">
    <citation type="journal article" date="2014" name="Planta">
        <title>Hydrogen peroxide controls transcriptional responses of ERF73/HRE1 and ADH1 via modulation of ethylene signaling during hypoxic stress.</title>
        <authorList>
            <person name="Yang C.-Y."/>
        </authorList>
    </citation>
    <scope>INDUCTION BY HYDROGEN PEROXIDE</scope>
    <source>
        <strain>cv. Columbia</strain>
    </source>
</reference>
<reference key="33">
    <citation type="journal article" date="2015" name="Autophagy">
        <title>Autophagy contributes to regulation of the hypoxia response during submergence in Arabidopsis thaliana.</title>
        <authorList>
            <person name="Chen L."/>
            <person name="Liao B."/>
            <person name="Qi H."/>
            <person name="Xie L.J."/>
            <person name="Huang L."/>
            <person name="Tan W.J."/>
            <person name="Zhai N."/>
            <person name="Yuan L.B."/>
            <person name="Zhou Y."/>
            <person name="Yu L.J."/>
            <person name="Chen Q.F."/>
            <person name="Shu W."/>
            <person name="Xiao S."/>
        </authorList>
    </citation>
    <scope>INDUCTION BY WATER SUBMERGENCE</scope>
</reference>
<reference evidence="34 35" key="34">
    <citation type="journal article" date="2015" name="Biochimie">
        <title>Structural insight into the conformational change of alcohol dehydrogenase from Arabidopsis thaliana L. during coenzyme binding.</title>
        <authorList>
            <person name="Chen F."/>
            <person name="Wang P."/>
            <person name="An Y."/>
            <person name="Huang J."/>
            <person name="Xu Y."/>
        </authorList>
    </citation>
    <scope>X-RAY CRYSTALLOGRAPHY (2.30 ANGSTROMS) OF 6-379 IN COMPLEX WITH NAD; SUBSTRATE AND ZINC</scope>
    <scope>COFACTOR</scope>
    <scope>HOMODIMER</scope>
</reference>
<reference evidence="36" key="35">
    <citation type="journal article" date="2024" name="Plant J.">
        <title>Structural and biochemical characterization of Arabidopsis alcohol dehydrogenases reveals distinct functional properties but similar redox sensitivity.</title>
        <authorList>
            <person name="Meloni M."/>
            <person name="Rossi J."/>
            <person name="Fanti S."/>
            <person name="Carloni G."/>
            <person name="Tedesco D."/>
            <person name="Treffon P."/>
            <person name="Piccinini L."/>
            <person name="Falini G."/>
            <person name="Trost P."/>
            <person name="Vierling E."/>
            <person name="Licausi F."/>
            <person name="Giuntoli B."/>
            <person name="Musiani F."/>
            <person name="Fermani S."/>
            <person name="Zaffagnini M."/>
        </authorList>
    </citation>
    <scope>X-RAY CRYSTALLOGRAPHY (1.70 ANGSTROMS) IN COMPLEX WITH NADH AND ZINC</scope>
    <scope>FUNCTION</scope>
    <scope>CATALYTIC ACTIVITY</scope>
    <scope>BIOPHYSICOCHEMICAL PROPERTIES</scope>
    <scope>ACTIVITY REGULATION</scope>
</reference>
<keyword id="KW-0002">3D-structure</keyword>
<keyword id="KW-0007">Acetylation</keyword>
<keyword id="KW-0963">Cytoplasm</keyword>
<keyword id="KW-0318">Glutathionylation</keyword>
<keyword id="KW-0479">Metal-binding</keyword>
<keyword id="KW-0520">NAD</keyword>
<keyword id="KW-0547">Nucleotide-binding</keyword>
<keyword id="KW-0560">Oxidoreductase</keyword>
<keyword id="KW-0597">Phosphoprotein</keyword>
<keyword id="KW-1185">Reference proteome</keyword>
<keyword id="KW-0862">Zinc</keyword>
<comment type="function">
    <text evidence="8 11 13 18 24">Alcohol dehydrogenase catalyzing the reduction of toxic aldehydes to the corresponding alcohols (PubMed:38308388). Mostly active on ethanol (EtOH), but exhibits broad substrate selectivity for primary and secondary alcohols (e.g. cinnamyl alcohol, octanol, geraniol, butanol, propyl alcohol, pentanol, isopentanol, ethylene glycol, isopropanol, methanol and tertiary butyl alcohol) (PubMed:23707506, PubMed:38308388). Also catalyzes the reverse reaction to convert allyl alcohol to highly toxic acryl-aldehyde (PubMed:20508152). Required for survival and acclimation in hypoxic conditions, especially in roots (PubMed:12857811, PubMed:9880346). Not able to catalyze NADH-dependent degradation of S-nitrosoglutathione (GSNO) (PubMed:38308388).</text>
</comment>
<comment type="catalytic activity">
    <reaction evidence="13 17">
        <text>a primary alcohol + NAD(+) = an aldehyde + NADH + H(+)</text>
        <dbReference type="Rhea" id="RHEA:10736"/>
        <dbReference type="ChEBI" id="CHEBI:15378"/>
        <dbReference type="ChEBI" id="CHEBI:15734"/>
        <dbReference type="ChEBI" id="CHEBI:17478"/>
        <dbReference type="ChEBI" id="CHEBI:57540"/>
        <dbReference type="ChEBI" id="CHEBI:57945"/>
        <dbReference type="EC" id="1.1.1.1"/>
    </reaction>
    <physiologicalReaction direction="left-to-right" evidence="30">
        <dbReference type="Rhea" id="RHEA:10737"/>
    </physiologicalReaction>
    <physiologicalReaction direction="right-to-left" evidence="30">
        <dbReference type="Rhea" id="RHEA:10738"/>
    </physiologicalReaction>
</comment>
<comment type="catalytic activity">
    <reaction evidence="13 17">
        <text>a secondary alcohol + NAD(+) = a ketone + NADH + H(+)</text>
        <dbReference type="Rhea" id="RHEA:10740"/>
        <dbReference type="ChEBI" id="CHEBI:15378"/>
        <dbReference type="ChEBI" id="CHEBI:17087"/>
        <dbReference type="ChEBI" id="CHEBI:35681"/>
        <dbReference type="ChEBI" id="CHEBI:57540"/>
        <dbReference type="ChEBI" id="CHEBI:57945"/>
        <dbReference type="EC" id="1.1.1.1"/>
    </reaction>
    <physiologicalReaction direction="left-to-right" evidence="30">
        <dbReference type="Rhea" id="RHEA:10741"/>
    </physiologicalReaction>
    <physiologicalReaction direction="right-to-left" evidence="30">
        <dbReference type="Rhea" id="RHEA:10742"/>
    </physiologicalReaction>
</comment>
<comment type="catalytic activity">
    <reaction evidence="18">
        <text>ethanol + NAD(+) = acetaldehyde + NADH + H(+)</text>
        <dbReference type="Rhea" id="RHEA:25290"/>
        <dbReference type="ChEBI" id="CHEBI:15343"/>
        <dbReference type="ChEBI" id="CHEBI:15378"/>
        <dbReference type="ChEBI" id="CHEBI:16236"/>
        <dbReference type="ChEBI" id="CHEBI:57540"/>
        <dbReference type="ChEBI" id="CHEBI:57945"/>
        <dbReference type="EC" id="1.1.1.1"/>
    </reaction>
    <physiologicalReaction direction="left-to-right" evidence="18">
        <dbReference type="Rhea" id="RHEA:25291"/>
    </physiologicalReaction>
    <physiologicalReaction direction="right-to-left" evidence="30">
        <dbReference type="Rhea" id="RHEA:25292"/>
    </physiologicalReaction>
</comment>
<comment type="cofactor">
    <cofactor evidence="15">
        <name>Zn(2+)</name>
        <dbReference type="ChEBI" id="CHEBI:29105"/>
    </cofactor>
    <text evidence="15">Binds 2 Zn(2+) ions per subunit.</text>
</comment>
<comment type="activity regulation">
    <text evidence="18 22">Alcohol dehydrogenase activity show inverse correlation with the decreasing availability of oxygen (PubMed:9522467). Slightly repressed by thiol-modifying agents N-ethylmaleimide (NEM) and 5,5-dithio-bis-(2-nitrobenzoic acid) (DTNB), as well as by methyl methanethiosulfonate (MMTS) in a dose-dependent manner (PubMed:38308388). Inhibited by hydrogen peroxide H(2)O(2) (PubMed:38308388).</text>
</comment>
<comment type="biophysicochemical properties">
    <kinetics>
        <KM evidence="13">1.65 mM for NAD(+) (at pH 10.5 and 25 degrees Celsius)</KM>
        <KM evidence="13">5.1 mM for ethanol (at pH 10.5 and 25 degrees Celsius)</KM>
        <Vmax evidence="13">7.9 umol/min/mg enzyme with NAD(+) as substrate (at pH 10.5 and 25 degrees Celsius)</Vmax>
        <Vmax evidence="13">70.1 umol/min/mg enzyme with ethanol as substrate (at pH 10.5 and 25 degrees Celsius)</Vmax>
        <text evidence="13">kcat is 328 min(-1) with NAD(+) as substrate (at pH 10.5 and 25 degrees Celsius).</text>
    </kinetics>
    <phDependence>
        <text evidence="13 18">Optimum pH is 10.5 (at 25 degrees Celsius).</text>
    </phDependence>
</comment>
<comment type="subunit">
    <text evidence="13 15">Homodimer.</text>
</comment>
<comment type="subcellular location">
    <subcellularLocation>
        <location evidence="31">Cytoplasm</location>
    </subcellularLocation>
</comment>
<comment type="tissue specificity">
    <text evidence="6 23">Root specific (PubMed:9611167). Also detected in etiolated seedlings and leaves in cold conditions (PubMed:12231733).</text>
</comment>
<comment type="induction">
    <text evidence="3 4 5 6 7 10 14 16 20 22 23 27">Transactivated by MYB2 in response to various stresses (PubMed:9611167). By 2,4-dichlorophenoxyacetic acid (synthetic auxin) in Arabidopsis as well as in maize (PubMed:2937058). Induced mostly in roots and shoot apex by hypoxia during water submergence or oxygen deprivation, in a MYB2-dependent manner, and partly via an ethylene-mediated pathway (PubMed:11402202, PubMed:11987307, PubMed:12509334, PubMed:26566261, PubMed:8787023, PubMed:9522467, PubMed:9611167). Accumulates in response to hydrogen peroxide H(2)O(2) during the early stages of hypoxia signaling (PubMed:18441225, PubMed:24395201). Decreased levels upon combined hypoxia and diphenylene iodonium chloride (DPI, an NADPH oxidase inhibitor) treatments (PubMed:24395201). Induced by abscisic acid (ABA), dehydration, estradiol, salt (NaCl), cold and sucrose treatments (PubMed:11987307, PubMed:12231733, PubMed:18441225, PubMed:8787023, PubMed:9611167). The induction by dehydration is ABA-dependent (PubMed:8787023). Observed in etiolated seedlings and leaves upon exposure to low temperature, probably via anaerobic metabolism and increase of ABA levels (PubMed:12231733). Strongly induced by caffeine (PubMed:12509334). May accumulate in roots during spaceflight, probably due to local hypoxia conditions (PubMed:11402191).</text>
</comment>
<comment type="PTM">
    <text evidence="9">Glutathionylated.</text>
</comment>
<comment type="disruption phenotype">
    <text evidence="7 8 11 17 24">Loss of alcohol dehydrogenase activity (PubMed:12509334, PubMed:3377754). Increased resistance to allyl alcohol (PubMed:20508152). Decreased survival, associated with impaired lateral roots development, upon oxygen deprivation leading to hypoxic conditions (PubMed:12509334, PubMed:12857811). Impaired root acclimation to hypoxic stress (PubMed:9880346).</text>
</comment>
<comment type="miscellaneous">
    <text evidence="28">Unlike most plants, Arabidopsis contains only one gene for ADH.</text>
</comment>
<comment type="similarity">
    <text evidence="29">Belongs to the zinc-containing alcohol dehydrogenase family. Class-P subfamily.</text>
</comment>
<dbReference type="EC" id="1.1.1.1" evidence="13 17 18"/>
<dbReference type="EMBL" id="M12196">
    <property type="protein sequence ID" value="AAA32728.1"/>
    <property type="molecule type" value="Genomic_DNA"/>
</dbReference>
<dbReference type="EMBL" id="X77943">
    <property type="protein sequence ID" value="CAA54911.1"/>
    <property type="molecule type" value="Genomic_DNA"/>
</dbReference>
<dbReference type="EMBL" id="D84240">
    <property type="protein sequence ID" value="BAA19615.1"/>
    <property type="molecule type" value="Genomic_DNA"/>
</dbReference>
<dbReference type="EMBL" id="D84241">
    <property type="protein sequence ID" value="BAA19616.1"/>
    <property type="molecule type" value="Genomic_DNA"/>
</dbReference>
<dbReference type="EMBL" id="D84242">
    <property type="protein sequence ID" value="BAA19617.1"/>
    <property type="molecule type" value="Genomic_DNA"/>
</dbReference>
<dbReference type="EMBL" id="D84243">
    <property type="protein sequence ID" value="BAA19618.1"/>
    <property type="molecule type" value="Genomic_DNA"/>
</dbReference>
<dbReference type="EMBL" id="D84244">
    <property type="protein sequence ID" value="BAA19619.1"/>
    <property type="molecule type" value="Genomic_DNA"/>
</dbReference>
<dbReference type="EMBL" id="D84245">
    <property type="protein sequence ID" value="BAA19620.1"/>
    <property type="molecule type" value="Genomic_DNA"/>
</dbReference>
<dbReference type="EMBL" id="D84246">
    <property type="protein sequence ID" value="BAA19621.1"/>
    <property type="molecule type" value="Genomic_DNA"/>
</dbReference>
<dbReference type="EMBL" id="D84247">
    <property type="protein sequence ID" value="BAA19622.1"/>
    <property type="molecule type" value="Genomic_DNA"/>
</dbReference>
<dbReference type="EMBL" id="D84248">
    <property type="protein sequence ID" value="BAA19623.1"/>
    <property type="molecule type" value="Genomic_DNA"/>
</dbReference>
<dbReference type="EMBL" id="D84249">
    <property type="protein sequence ID" value="BAA19624.1"/>
    <property type="molecule type" value="Genomic_DNA"/>
</dbReference>
<dbReference type="EMBL" id="D63460">
    <property type="protein sequence ID" value="BAA22983.1"/>
    <property type="molecule type" value="Genomic_DNA"/>
</dbReference>
<dbReference type="EMBL" id="D63461">
    <property type="protein sequence ID" value="BAA22979.1"/>
    <property type="molecule type" value="Genomic_DNA"/>
</dbReference>
<dbReference type="EMBL" id="D63462">
    <property type="protein sequence ID" value="BAA22980.1"/>
    <property type="molecule type" value="Genomic_DNA"/>
</dbReference>
<dbReference type="EMBL" id="D63463">
    <property type="protein sequence ID" value="BAA22981.1"/>
    <property type="molecule type" value="Genomic_DNA"/>
</dbReference>
<dbReference type="EMBL" id="D63464">
    <property type="protein sequence ID" value="BAA22982.1"/>
    <property type="molecule type" value="Genomic_DNA"/>
</dbReference>
<dbReference type="EMBL" id="AF110456">
    <property type="protein sequence ID" value="AAF23554.1"/>
    <property type="molecule type" value="Genomic_DNA"/>
</dbReference>
<dbReference type="EMBL" id="AB048394">
    <property type="protein sequence ID" value="BAB32568.1"/>
    <property type="molecule type" value="Genomic_DNA"/>
</dbReference>
<dbReference type="EMBL" id="AB048395">
    <property type="protein sequence ID" value="BAB32569.1"/>
    <property type="molecule type" value="Genomic_DNA"/>
</dbReference>
<dbReference type="EMBL" id="AY536888">
    <property type="protein sequence ID" value="AAS45601.2"/>
    <property type="molecule type" value="Genomic_DNA"/>
</dbReference>
<dbReference type="EMBL" id="AC002291">
    <property type="protein sequence ID" value="AAC00625.1"/>
    <property type="molecule type" value="Genomic_DNA"/>
</dbReference>
<dbReference type="EMBL" id="CP002684">
    <property type="protein sequence ID" value="AEE35937.1"/>
    <property type="molecule type" value="Genomic_DNA"/>
</dbReference>
<dbReference type="EMBL" id="AY045612">
    <property type="protein sequence ID" value="AAK73970.1"/>
    <property type="molecule type" value="mRNA"/>
</dbReference>
<dbReference type="EMBL" id="AY090330">
    <property type="protein sequence ID" value="AAL90991.1"/>
    <property type="molecule type" value="mRNA"/>
</dbReference>
<dbReference type="EMBL" id="AY088010">
    <property type="protein sequence ID" value="AAM65556.1"/>
    <property type="molecule type" value="mRNA"/>
</dbReference>
<dbReference type="EMBL" id="AF056557">
    <property type="protein sequence ID" value="AAD41572.1"/>
    <property type="molecule type" value="Genomic_DNA"/>
</dbReference>
<dbReference type="PIR" id="A23815">
    <property type="entry name" value="DEMUAM"/>
</dbReference>
<dbReference type="RefSeq" id="NP_177837.1">
    <property type="nucleotide sequence ID" value="NM_106362.3"/>
</dbReference>
<dbReference type="PDB" id="4RQT">
    <property type="method" value="X-ray"/>
    <property type="resolution" value="2.30 A"/>
    <property type="chains" value="A=6-379"/>
</dbReference>
<dbReference type="PDB" id="4RQU">
    <property type="method" value="X-ray"/>
    <property type="resolution" value="2.50 A"/>
    <property type="chains" value="A/B=6-379"/>
</dbReference>
<dbReference type="PDB" id="8CON">
    <property type="method" value="X-ray"/>
    <property type="resolution" value="1.70 A"/>
    <property type="chains" value="A=1-379"/>
</dbReference>
<dbReference type="PDBsum" id="4RQT"/>
<dbReference type="PDBsum" id="4RQU"/>
<dbReference type="PDBsum" id="8CON"/>
<dbReference type="SMR" id="P06525"/>
<dbReference type="BioGRID" id="29266">
    <property type="interactions" value="4"/>
</dbReference>
<dbReference type="FunCoup" id="P06525">
    <property type="interactions" value="168"/>
</dbReference>
<dbReference type="STRING" id="3702.P06525"/>
<dbReference type="iPTMnet" id="P06525"/>
<dbReference type="MetOSite" id="P06525"/>
<dbReference type="PaxDb" id="3702-AT1G77120.1"/>
<dbReference type="ProteomicsDB" id="244713"/>
<dbReference type="EnsemblPlants" id="AT1G77120.1">
    <property type="protein sequence ID" value="AT1G77120.1"/>
    <property type="gene ID" value="AT1G77120"/>
</dbReference>
<dbReference type="GeneID" id="844047"/>
<dbReference type="Gramene" id="AT1G77120.1">
    <property type="protein sequence ID" value="AT1G77120.1"/>
    <property type="gene ID" value="AT1G77120"/>
</dbReference>
<dbReference type="KEGG" id="ath:AT1G77120"/>
<dbReference type="Araport" id="AT1G77120"/>
<dbReference type="TAIR" id="AT1G77120">
    <property type="gene designation" value="ADH1"/>
</dbReference>
<dbReference type="eggNOG" id="KOG0022">
    <property type="taxonomic scope" value="Eukaryota"/>
</dbReference>
<dbReference type="HOGENOM" id="CLU_026673_14_0_1"/>
<dbReference type="InParanoid" id="P06525"/>
<dbReference type="OMA" id="EPWYCFA"/>
<dbReference type="PhylomeDB" id="P06525"/>
<dbReference type="BRENDA" id="1.1.1.1">
    <property type="organism ID" value="399"/>
</dbReference>
<dbReference type="CD-CODE" id="4299E36E">
    <property type="entry name" value="Nucleolus"/>
</dbReference>
<dbReference type="EvolutionaryTrace" id="P06525"/>
<dbReference type="PRO" id="PR:P06525"/>
<dbReference type="Proteomes" id="UP000006548">
    <property type="component" value="Chromosome 1"/>
</dbReference>
<dbReference type="ExpressionAtlas" id="P06525">
    <property type="expression patterns" value="baseline and differential"/>
</dbReference>
<dbReference type="GO" id="GO:0005829">
    <property type="term" value="C:cytosol"/>
    <property type="evidence" value="ECO:0007005"/>
    <property type="project" value="TAIR"/>
</dbReference>
<dbReference type="GO" id="GO:0005886">
    <property type="term" value="C:plasma membrane"/>
    <property type="evidence" value="ECO:0007005"/>
    <property type="project" value="TAIR"/>
</dbReference>
<dbReference type="GO" id="GO:0004022">
    <property type="term" value="F:alcohol dehydrogenase (NAD+) activity"/>
    <property type="evidence" value="ECO:0000314"/>
    <property type="project" value="TAIR"/>
</dbReference>
<dbReference type="GO" id="GO:0120542">
    <property type="term" value="F:ethanol dehydrogenase (NAD+) activity"/>
    <property type="evidence" value="ECO:0007669"/>
    <property type="project" value="RHEA"/>
</dbReference>
<dbReference type="GO" id="GO:0000166">
    <property type="term" value="F:nucleotide binding"/>
    <property type="evidence" value="ECO:0007669"/>
    <property type="project" value="UniProtKB-KW"/>
</dbReference>
<dbReference type="GO" id="GO:0042803">
    <property type="term" value="F:protein homodimerization activity"/>
    <property type="evidence" value="ECO:0000314"/>
    <property type="project" value="UniProtKB"/>
</dbReference>
<dbReference type="GO" id="GO:0008270">
    <property type="term" value="F:zinc ion binding"/>
    <property type="evidence" value="ECO:0007669"/>
    <property type="project" value="InterPro"/>
</dbReference>
<dbReference type="GO" id="GO:0071456">
    <property type="term" value="P:cellular response to hypoxia"/>
    <property type="evidence" value="ECO:0007007"/>
    <property type="project" value="TAIR"/>
</dbReference>
<dbReference type="GO" id="GO:1900039">
    <property type="term" value="P:positive regulation of cellular response to hypoxia"/>
    <property type="evidence" value="ECO:0000315"/>
    <property type="project" value="UniProtKB"/>
</dbReference>
<dbReference type="GO" id="GO:0009737">
    <property type="term" value="P:response to abscisic acid"/>
    <property type="evidence" value="ECO:0000270"/>
    <property type="project" value="UniProtKB"/>
</dbReference>
<dbReference type="GO" id="GO:0031000">
    <property type="term" value="P:response to caffeine"/>
    <property type="evidence" value="ECO:0000270"/>
    <property type="project" value="UniProtKB"/>
</dbReference>
<dbReference type="GO" id="GO:0009409">
    <property type="term" value="P:response to cold"/>
    <property type="evidence" value="ECO:0000270"/>
    <property type="project" value="UniProtKB"/>
</dbReference>
<dbReference type="GO" id="GO:0032355">
    <property type="term" value="P:response to estradiol"/>
    <property type="evidence" value="ECO:0000270"/>
    <property type="project" value="UniProtKB"/>
</dbReference>
<dbReference type="GO" id="GO:0009413">
    <property type="term" value="P:response to flooding"/>
    <property type="evidence" value="ECO:0000270"/>
    <property type="project" value="UniProtKB"/>
</dbReference>
<dbReference type="GO" id="GO:0042542">
    <property type="term" value="P:response to hydrogen peroxide"/>
    <property type="evidence" value="ECO:0000270"/>
    <property type="project" value="UniProtKB"/>
</dbReference>
<dbReference type="GO" id="GO:0001666">
    <property type="term" value="P:response to hypoxia"/>
    <property type="evidence" value="ECO:0000314"/>
    <property type="project" value="UniProtKB"/>
</dbReference>
<dbReference type="GO" id="GO:0006970">
    <property type="term" value="P:response to osmotic stress"/>
    <property type="evidence" value="ECO:0000316"/>
    <property type="project" value="TAIR"/>
</dbReference>
<dbReference type="GO" id="GO:0009651">
    <property type="term" value="P:response to salt stress"/>
    <property type="evidence" value="ECO:0000270"/>
    <property type="project" value="UniProtKB"/>
</dbReference>
<dbReference type="GO" id="GO:0009744">
    <property type="term" value="P:response to sucrose"/>
    <property type="evidence" value="ECO:0000270"/>
    <property type="project" value="UniProtKB"/>
</dbReference>
<dbReference type="GO" id="GO:0009414">
    <property type="term" value="P:response to water deprivation"/>
    <property type="evidence" value="ECO:0000270"/>
    <property type="project" value="UniProtKB"/>
</dbReference>
<dbReference type="CDD" id="cd08301">
    <property type="entry name" value="alcohol_DH_plants"/>
    <property type="match status" value="1"/>
</dbReference>
<dbReference type="FunFam" id="3.90.180.10:FF:000067">
    <property type="entry name" value="alcohol dehydrogenase 1-like isoform X1"/>
    <property type="match status" value="1"/>
</dbReference>
<dbReference type="FunFam" id="3.40.50.720:FF:001292">
    <property type="entry name" value="Alcohol dehydrogenase class-P"/>
    <property type="match status" value="1"/>
</dbReference>
<dbReference type="Gene3D" id="3.90.180.10">
    <property type="entry name" value="Medium-chain alcohol dehydrogenases, catalytic domain"/>
    <property type="match status" value="1"/>
</dbReference>
<dbReference type="Gene3D" id="3.40.50.720">
    <property type="entry name" value="NAD(P)-binding Rossmann-like Domain"/>
    <property type="match status" value="1"/>
</dbReference>
<dbReference type="InterPro" id="IPR013149">
    <property type="entry name" value="ADH-like_C"/>
</dbReference>
<dbReference type="InterPro" id="IPR013154">
    <property type="entry name" value="ADH-like_N"/>
</dbReference>
<dbReference type="InterPro" id="IPR002328">
    <property type="entry name" value="ADH_Zn_CS"/>
</dbReference>
<dbReference type="InterPro" id="IPR011032">
    <property type="entry name" value="GroES-like_sf"/>
</dbReference>
<dbReference type="InterPro" id="IPR036291">
    <property type="entry name" value="NAD(P)-bd_dom_sf"/>
</dbReference>
<dbReference type="PANTHER" id="PTHR43880">
    <property type="entry name" value="ALCOHOL DEHYDROGENASE"/>
    <property type="match status" value="1"/>
</dbReference>
<dbReference type="PANTHER" id="PTHR43880:SF26">
    <property type="entry name" value="ALCOHOL DEHYDROGENASE CLASS-P"/>
    <property type="match status" value="1"/>
</dbReference>
<dbReference type="Pfam" id="PF08240">
    <property type="entry name" value="ADH_N"/>
    <property type="match status" value="1"/>
</dbReference>
<dbReference type="Pfam" id="PF00107">
    <property type="entry name" value="ADH_zinc_N"/>
    <property type="match status" value="1"/>
</dbReference>
<dbReference type="SUPFAM" id="SSF50129">
    <property type="entry name" value="GroES-like"/>
    <property type="match status" value="2"/>
</dbReference>
<dbReference type="SUPFAM" id="SSF51735">
    <property type="entry name" value="NAD(P)-binding Rossmann-fold domains"/>
    <property type="match status" value="1"/>
</dbReference>
<dbReference type="PROSITE" id="PS00059">
    <property type="entry name" value="ADH_ZINC"/>
    <property type="match status" value="1"/>
</dbReference>
<accession>P06525</accession>
<accession>O04080</accession>
<accession>O04713</accession>
<accession>O04717</accession>
<accession>O04868</accession>
<accession>O23821</accession>
<accession>Q8LA61</accession>
<accession>Q94AY6</accession>
<accession>Q9CAZ2</accession>
<accession>Q9CAZ3</accession>
<accession>Q9SX08</accession>
<organism>
    <name type="scientific">Arabidopsis thaliana</name>
    <name type="common">Mouse-ear cress</name>
    <dbReference type="NCBI Taxonomy" id="3702"/>
    <lineage>
        <taxon>Eukaryota</taxon>
        <taxon>Viridiplantae</taxon>
        <taxon>Streptophyta</taxon>
        <taxon>Embryophyta</taxon>
        <taxon>Tracheophyta</taxon>
        <taxon>Spermatophyta</taxon>
        <taxon>Magnoliopsida</taxon>
        <taxon>eudicotyledons</taxon>
        <taxon>Gunneridae</taxon>
        <taxon>Pentapetalae</taxon>
        <taxon>rosids</taxon>
        <taxon>malvids</taxon>
        <taxon>Brassicales</taxon>
        <taxon>Brassicaceae</taxon>
        <taxon>Camelineae</taxon>
        <taxon>Arabidopsis</taxon>
    </lineage>
</organism>
<gene>
    <name evidence="28" type="primary">ADH1</name>
    <name evidence="27" type="synonym">ADH</name>
    <name evidence="32" type="ordered locus">At1g77120</name>
    <name evidence="33" type="ORF">F22K20.19</name>
</gene>
<feature type="initiator methionine" description="Removed" evidence="39">
    <location>
        <position position="1"/>
    </location>
</feature>
<feature type="chain" id="PRO_0000160697" description="Alcohol dehydrogenase class-P">
    <location>
        <begin position="2"/>
        <end position="379"/>
    </location>
</feature>
<feature type="binding site" evidence="15 18 34 35 36">
    <location>
        <position position="47"/>
    </location>
    <ligand>
        <name>Zn(2+)</name>
        <dbReference type="ChEBI" id="CHEBI:29105"/>
        <label>1</label>
        <note>catalytic</note>
    </ligand>
</feature>
<feature type="binding site" evidence="15 34">
    <location>
        <position position="49"/>
    </location>
    <ligand>
        <name>an alcohol</name>
        <dbReference type="ChEBI" id="CHEBI:30879"/>
    </ligand>
</feature>
<feature type="binding site" evidence="15 35">
    <location>
        <position position="49"/>
    </location>
    <ligand>
        <name>NAD(+)</name>
        <dbReference type="ChEBI" id="CHEBI:57540"/>
    </ligand>
</feature>
<feature type="binding site" evidence="15 18 35 36">
    <location>
        <position position="50"/>
    </location>
    <ligand>
        <name>Zn(2+)</name>
        <dbReference type="ChEBI" id="CHEBI:29105"/>
        <label>1</label>
        <note>catalytic</note>
    </ligand>
</feature>
<feature type="binding site" evidence="1">
    <location>
        <position position="69"/>
    </location>
    <ligand>
        <name>an alcohol</name>
        <dbReference type="ChEBI" id="CHEBI:30879"/>
    </ligand>
</feature>
<feature type="binding site" evidence="15 18 34 35 36">
    <location>
        <position position="69"/>
    </location>
    <ligand>
        <name>Zn(2+)</name>
        <dbReference type="ChEBI" id="CHEBI:29105"/>
        <label>1</label>
        <note>catalytic</note>
    </ligand>
</feature>
<feature type="binding site" evidence="18 36">
    <location>
        <position position="70"/>
    </location>
    <ligand>
        <name>Zn(2+)</name>
        <dbReference type="ChEBI" id="CHEBI:29105"/>
        <label>1</label>
        <note>catalytic</note>
    </ligand>
</feature>
<feature type="binding site" evidence="15 18 34 35 36">
    <location>
        <position position="99"/>
    </location>
    <ligand>
        <name>Zn(2+)</name>
        <dbReference type="ChEBI" id="CHEBI:29105"/>
        <label>2</label>
    </ligand>
</feature>
<feature type="binding site" evidence="15 18 34 35 36">
    <location>
        <position position="102"/>
    </location>
    <ligand>
        <name>Zn(2+)</name>
        <dbReference type="ChEBI" id="CHEBI:29105"/>
        <label>2</label>
    </ligand>
</feature>
<feature type="binding site" evidence="15 18 34 35 36">
    <location>
        <position position="105"/>
    </location>
    <ligand>
        <name>Zn(2+)</name>
        <dbReference type="ChEBI" id="CHEBI:29105"/>
        <label>2</label>
    </ligand>
</feature>
<feature type="binding site" evidence="15 18 34 35 36">
    <location>
        <position position="113"/>
    </location>
    <ligand>
        <name>Zn(2+)</name>
        <dbReference type="ChEBI" id="CHEBI:29105"/>
        <label>2</label>
    </ligand>
</feature>
<feature type="binding site" evidence="15 18 34 35 36">
    <location>
        <position position="177"/>
    </location>
    <ligand>
        <name>Zn(2+)</name>
        <dbReference type="ChEBI" id="CHEBI:29105"/>
        <label>1</label>
        <note>catalytic</note>
    </ligand>
</feature>
<feature type="binding site" evidence="15 18 35 36">
    <location>
        <position position="206"/>
    </location>
    <ligand>
        <name>NAD(+)</name>
        <dbReference type="ChEBI" id="CHEBI:57540"/>
    </ligand>
</feature>
<feature type="binding site" evidence="15 18 35 36">
    <location>
        <position position="226"/>
    </location>
    <ligand>
        <name>NAD(+)</name>
        <dbReference type="ChEBI" id="CHEBI:57540"/>
    </ligand>
</feature>
<feature type="binding site" evidence="15 18 35 36">
    <location>
        <position position="231"/>
    </location>
    <ligand>
        <name>NAD(+)</name>
        <dbReference type="ChEBI" id="CHEBI:57540"/>
    </ligand>
</feature>
<feature type="binding site" evidence="15 18 35 36">
    <location>
        <position position="272"/>
    </location>
    <ligand>
        <name>NAD(+)</name>
        <dbReference type="ChEBI" id="CHEBI:57540"/>
    </ligand>
</feature>
<feature type="binding site" evidence="15 18 35 36">
    <location>
        <position position="295"/>
    </location>
    <ligand>
        <name>NAD(+)</name>
        <dbReference type="ChEBI" id="CHEBI:57540"/>
    </ligand>
</feature>
<feature type="binding site" evidence="18 36">
    <location>
        <position position="297"/>
    </location>
    <ligand>
        <name>NAD(+)</name>
        <dbReference type="ChEBI" id="CHEBI:57540"/>
    </ligand>
</feature>
<feature type="binding site" evidence="18 36">
    <location>
        <position position="320"/>
    </location>
    <ligand>
        <name>NAD(+)</name>
        <dbReference type="ChEBI" id="CHEBI:57540"/>
    </ligand>
</feature>
<feature type="binding site" evidence="15 18 35 36">
    <location>
        <position position="322"/>
    </location>
    <ligand>
        <name>NAD(+)</name>
        <dbReference type="ChEBI" id="CHEBI:57540"/>
    </ligand>
</feature>
<feature type="binding site" evidence="15 35">
    <location>
        <position position="372"/>
    </location>
    <ligand>
        <name>NAD(+)</name>
        <dbReference type="ChEBI" id="CHEBI:57540"/>
    </ligand>
</feature>
<feature type="modified residue" description="N-acetylserine" evidence="39">
    <location>
        <position position="2"/>
    </location>
</feature>
<feature type="modified residue" description="Phosphoserine" evidence="37 38">
    <location>
        <position position="229"/>
    </location>
</feature>
<feature type="sequence variant" description="In strain: cv. Hiroshima." evidence="19">
    <original>F</original>
    <variation>Y</variation>
    <location>
        <position position="43"/>
    </location>
</feature>
<feature type="sequence variant" description="In strain: cv. Bla-10, cv. Ci-0, cv. Cvi-0, cv. Hiroshima, cv. Kas-1 and cv. Ita-0." evidence="2 19 21">
    <original>V</original>
    <variation>L</variation>
    <location>
        <position position="51"/>
    </location>
</feature>
<feature type="sequence variant" description="In strain: cv. Aa-0, cv. Al-0, cv. Bl-1, cv. Bs-0, cv. Gr-1, cv. Mt-0, cv. Shokei and cv. Yo-0." evidence="19 21 25">
    <original>E</original>
    <variation>D</variation>
    <location>
        <position position="101"/>
    </location>
</feature>
<feature type="sequence variant" description="In strain: cv. Bl-1 and cv. Gr-1." evidence="21 25">
    <original>H</original>
    <variation>K</variation>
    <location>
        <position position="106"/>
    </location>
</feature>
<feature type="sequence variant" description="In strain: cv. Aa-0, cv. Al-0, cv. Bs-0, cv. Mt-0, cv. Shokei and cv. Yo-0." evidence="19 21">
    <original>H</original>
    <variation>Q</variation>
    <location>
        <position position="106"/>
    </location>
</feature>
<feature type="sequence variant" description="In strain: cv. Es-0." evidence="21">
    <original>T</original>
    <variation>P</variation>
    <location>
        <position position="120"/>
    </location>
</feature>
<feature type="sequence variant" description="In strain: cv. Bla-10." evidence="21">
    <original>S</original>
    <variation>A</variation>
    <location>
        <position position="180"/>
    </location>
</feature>
<feature type="sequence variant" description="In strain: cv. Cvi-0." evidence="2">
    <original>S</original>
    <variation>T</variation>
    <location>
        <position position="197"/>
    </location>
</feature>
<feature type="sequence variant" description="In strain: cv. Kas-1." evidence="2">
    <original>A</original>
    <variation>V</variation>
    <location>
        <position position="217"/>
    </location>
</feature>
<feature type="mutagenesis site" description="In R006; inactive enzyme." evidence="12 17">
    <original>C</original>
    <variation>Y</variation>
    <location>
        <position position="105"/>
    </location>
</feature>
<feature type="sequence conflict" description="In Ref. 11; AAM65556." evidence="29" ref="11">
    <original>V</original>
    <variation>L</variation>
    <location>
        <position position="154"/>
    </location>
</feature>
<feature type="turn" evidence="41">
    <location>
        <begin position="2"/>
        <end position="5"/>
    </location>
</feature>
<feature type="strand" evidence="41">
    <location>
        <begin position="8"/>
        <end position="15"/>
    </location>
</feature>
<feature type="strand" evidence="41">
    <location>
        <begin position="23"/>
        <end position="29"/>
    </location>
</feature>
<feature type="strand" evidence="41">
    <location>
        <begin position="36"/>
        <end position="45"/>
    </location>
</feature>
<feature type="helix" evidence="41">
    <location>
        <begin position="48"/>
        <end position="55"/>
    </location>
</feature>
<feature type="turn" evidence="41">
    <location>
        <begin position="56"/>
        <end position="58"/>
    </location>
</feature>
<feature type="strand" evidence="41">
    <location>
        <begin position="70"/>
        <end position="78"/>
    </location>
</feature>
<feature type="strand" evidence="41">
    <location>
        <begin position="90"/>
        <end position="93"/>
    </location>
</feature>
<feature type="strand" evidence="41">
    <location>
        <begin position="100"/>
        <end position="102"/>
    </location>
</feature>
<feature type="turn" evidence="41">
    <location>
        <begin position="103"/>
        <end position="106"/>
    </location>
</feature>
<feature type="strand" evidence="40">
    <location>
        <begin position="107"/>
        <end position="109"/>
    </location>
</feature>
<feature type="turn" evidence="41">
    <location>
        <begin position="114"/>
        <end position="116"/>
    </location>
</feature>
<feature type="turn" evidence="41">
    <location>
        <begin position="126"/>
        <end position="128"/>
    </location>
</feature>
<feature type="strand" evidence="41">
    <location>
        <begin position="132"/>
        <end position="135"/>
    </location>
</feature>
<feature type="strand" evidence="40">
    <location>
        <begin position="138"/>
        <end position="141"/>
    </location>
</feature>
<feature type="turn" evidence="41">
    <location>
        <begin position="144"/>
        <end position="146"/>
    </location>
</feature>
<feature type="strand" evidence="41">
    <location>
        <begin position="149"/>
        <end position="156"/>
    </location>
</feature>
<feature type="helix" evidence="41">
    <location>
        <begin position="157"/>
        <end position="159"/>
    </location>
</feature>
<feature type="strand" evidence="41">
    <location>
        <begin position="160"/>
        <end position="162"/>
    </location>
</feature>
<feature type="helix" evidence="41">
    <location>
        <begin position="169"/>
        <end position="172"/>
    </location>
</feature>
<feature type="turn" evidence="41">
    <location>
        <begin position="173"/>
        <end position="177"/>
    </location>
</feature>
<feature type="helix" evidence="41">
    <location>
        <begin position="178"/>
        <end position="187"/>
    </location>
</feature>
<feature type="turn" evidence="41">
    <location>
        <begin position="188"/>
        <end position="190"/>
    </location>
</feature>
<feature type="strand" evidence="41">
    <location>
        <begin position="197"/>
        <end position="201"/>
    </location>
</feature>
<feature type="helix" evidence="41">
    <location>
        <begin position="205"/>
        <end position="216"/>
    </location>
</feature>
<feature type="strand" evidence="41">
    <location>
        <begin position="220"/>
        <end position="225"/>
    </location>
</feature>
<feature type="helix" evidence="41">
    <location>
        <begin position="231"/>
        <end position="236"/>
    </location>
</feature>
<feature type="turn" evidence="41">
    <location>
        <begin position="237"/>
        <end position="239"/>
    </location>
</feature>
<feature type="strand" evidence="41">
    <location>
        <begin position="242"/>
        <end position="244"/>
    </location>
</feature>
<feature type="helix" evidence="41">
    <location>
        <begin position="246"/>
        <end position="248"/>
    </location>
</feature>
<feature type="helix" evidence="41">
    <location>
        <begin position="253"/>
        <end position="261"/>
    </location>
</feature>
<feature type="strand" evidence="41">
    <location>
        <begin position="265"/>
        <end position="270"/>
    </location>
</feature>
<feature type="helix" evidence="41">
    <location>
        <begin position="275"/>
        <end position="283"/>
    </location>
</feature>
<feature type="turn" evidence="41">
    <location>
        <begin position="287"/>
        <end position="289"/>
    </location>
</feature>
<feature type="strand" evidence="41">
    <location>
        <begin position="291"/>
        <end position="294"/>
    </location>
</feature>
<feature type="helix" evidence="41">
    <location>
        <begin position="309"/>
        <end position="312"/>
    </location>
</feature>
<feature type="strand" evidence="41">
    <location>
        <begin position="316"/>
        <end position="319"/>
    </location>
</feature>
<feature type="helix" evidence="41">
    <location>
        <begin position="322"/>
        <end position="324"/>
    </location>
</feature>
<feature type="turn" evidence="41">
    <location>
        <begin position="327"/>
        <end position="330"/>
    </location>
</feature>
<feature type="helix" evidence="41">
    <location>
        <begin position="331"/>
        <end position="339"/>
    </location>
</feature>
<feature type="helix" evidence="41">
    <location>
        <begin position="346"/>
        <end position="348"/>
    </location>
</feature>
<feature type="strand" evidence="41">
    <location>
        <begin position="349"/>
        <end position="354"/>
    </location>
</feature>
<feature type="helix" evidence="41">
    <location>
        <begin position="355"/>
        <end position="357"/>
    </location>
</feature>
<feature type="helix" evidence="41">
    <location>
        <begin position="358"/>
        <end position="367"/>
    </location>
</feature>
<feature type="strand" evidence="41">
    <location>
        <begin position="372"/>
        <end position="376"/>
    </location>
</feature>
<proteinExistence type="evidence at protein level"/>